<keyword id="KW-0012">Acyltransferase</keyword>
<keyword id="KW-0489">Methyltransferase</keyword>
<keyword id="KW-0511">Multifunctional enzyme</keyword>
<keyword id="KW-0521">NADP</keyword>
<keyword id="KW-0596">Phosphopantetheine</keyword>
<keyword id="KW-0597">Phosphoprotein</keyword>
<keyword id="KW-0808">Transferase</keyword>
<name>CLAF_PENCR</name>
<reference key="1">
    <citation type="journal article" date="2019" name="J. Am. Chem. Soc.">
        <title>Peniphenone and penilactone formation in Penicillium crustosum via 1,4-Michael additions of ortho-quinone methide from hydroxyclavatol to gamma-butyrolactones from Crustosic Acid.</title>
        <authorList>
            <person name="Fan J."/>
            <person name="Liao G."/>
            <person name="Kindinger F."/>
            <person name="Ludwig-Radtke L."/>
            <person name="Yin W.B."/>
            <person name="Li S.M."/>
        </authorList>
    </citation>
    <scope>NUCLEOTIDE SEQUENCE [GENOMIC DNA]</scope>
    <scope>FUNCTION</scope>
    <scope>DISRUPTION PHENOTYPE</scope>
    <scope>CATALYTIC ACTIVITY</scope>
    <scope>DOMAIN</scope>
    <scope>PATHWAY</scope>
    <source>
        <strain>PRB-2</strain>
    </source>
</reference>
<reference key="2">
    <citation type="journal article" date="2020" name="J. Org. Chem.">
        <title>Increasing Structural Diversity of Natural Products by Michael Addition with ortho-Quinone Methide as the Acceptor.</title>
        <authorList>
            <person name="Liao G."/>
            <person name="Fan J."/>
            <person name="Ludwig-Radtke L."/>
            <person name="Backhaus K."/>
            <person name="Li S.M."/>
        </authorList>
    </citation>
    <scope>FUNCTION</scope>
</reference>
<comment type="function">
    <text evidence="1 3 10 11">Non-reducing polyketide synthase; part of the cla gene cluster that produces clavatol and ortho-quinone methide (PubMed:30811183). The clavatol biosynthesis cluster cla and the terrestric acid cluster tra are both involved in the production of peniphenones and penilactones (PubMed:30811183). The non-reducing PKS claF is responsible for the formation of clavatol from successive condensations of 3 malonyl-CoA units, presumably with a simple acetyl-CoA starter unit, and 2 methylation steps (PubMed:30811183). The esterase claE probably collaborates with claF by catalyzing the hydrolysis of ACP-bound acyl intermediates to free the ACP from stalled intermediates (By similarity). The clavatol oxidase claD then converts clavatol to hydroxyclavatol (PubMed:30811183). Spontaneous dehydration of hydroxyclavatol leads to the accumulation of the highly active ortho-quinone methide (PubMed:30811183, PubMed:31860310). On the other hand, the PKS-NRPS hybrid traA is involved in the formation of crustosic acid, with the help of traB and traD (PubMed:30811183). The polyketide synthase module (PKS) of traA is responsible for the synthesis of the polyketide backbone via the condensation of an acetyl-CoA starter unit with 3 malonyl-CoA units (PubMed:30811183). The downstream nonribosomal peptide synthetase (NRPS) module then amidates the carboxyl end of the polyketide with L-malic acid (PubMed:30811183). Because traA lacks a designated enoylreductase (ER) domain, the required activity is provided the enoyl reductase traG (By similarity). Crustosic acid undergoes decarboxylation and isomerization to the terrestric acid, catalyzed by the 2-oxoglutarate-dependent dioxygenase traH (PubMed:30811183). Both acids are further converted to the 2 gamma-butyrolactones (R)-5-methyltetronic acid and (S)-5-carboxylmethyltetronic acid, with involvement of the cytochrome P450 monooxygenase claJ (PubMed:30811183). Spontaneous addition of the methide to these gamma-butyrolactones leads to peniphenone D and penilactone D, which undergo again stereospecific attacking by methide to give penilactones A and B (PubMed:30811183, PubMed:31860310).</text>
</comment>
<comment type="catalytic activity">
    <reaction evidence="10">
        <text>3 malonyl-CoA + acetyl-CoA + AH2 + 2 S-adenosyl-L-methionine + H(+) = clavatol + A + 2 S-adenosyl-L-homocysteine + 3 CO2 + 4 CoA + H2O</text>
        <dbReference type="Rhea" id="RHEA:70075"/>
        <dbReference type="ChEBI" id="CHEBI:13193"/>
        <dbReference type="ChEBI" id="CHEBI:15377"/>
        <dbReference type="ChEBI" id="CHEBI:15378"/>
        <dbReference type="ChEBI" id="CHEBI:16526"/>
        <dbReference type="ChEBI" id="CHEBI:17499"/>
        <dbReference type="ChEBI" id="CHEBI:57287"/>
        <dbReference type="ChEBI" id="CHEBI:57288"/>
        <dbReference type="ChEBI" id="CHEBI:57384"/>
        <dbReference type="ChEBI" id="CHEBI:57856"/>
        <dbReference type="ChEBI" id="CHEBI:59789"/>
        <dbReference type="ChEBI" id="CHEBI:188925"/>
    </reaction>
    <physiologicalReaction direction="left-to-right" evidence="10">
        <dbReference type="Rhea" id="RHEA:70076"/>
    </physiologicalReaction>
</comment>
<comment type="cofactor">
    <cofactor evidence="5">
        <name>pantetheine 4'-phosphate</name>
        <dbReference type="ChEBI" id="CHEBI:47942"/>
    </cofactor>
    <text evidence="5">Binds 1 phosphopantetheine covalently.</text>
</comment>
<comment type="pathway">
    <text evidence="10">Secondary metabolite biosynthesis.</text>
</comment>
<comment type="domain">
    <text evidence="13">Multidomain protein; including an N-terminal starter unit:ACP transacylase (SAT) domain, a beta-ketoacyl synthase (KS) domain, a malonyl-CoA:ACP transacylase (MAT) domain, a product template domain, a acyl carrier protein (ACP) domain, a methyltransferase domain (CMeT) and a reductive NADPH-binding domain that is required for NADPH-dependent product release.</text>
</comment>
<comment type="disruption phenotype">
    <text evidence="10">Completely abolishes the production of clavatol, as well as of the clavatol-derived compounds peniphenone D, penilactone D, penilactone A and penilactone B (PubMed:30811183). Leads to the accumulation of the 2 tetronic acids terrestric acid and crustosic acid (PubMed:30811183).</text>
</comment>
<accession>A0A481WQB6</accession>
<sequence>MPSESYPRVNPKVFLFGPQALAFDAKLFTTLQSHLYDSWALDALSDLPIIWESLVKQVPKLQHVEGERLLRELHQGLQTGSLPDSLFPLPNILLSPLVVIVQLTQYLAFVRSGLPGLGDTDEIPQSVMQTSESLGLCTGILSAFAVSCASSIAKVQQYGAVAVRLSMLVGALVDAEEASPDTGSPAMSFSMSWNALESRTSVDEVLAEFPEAYISVFVDEKRATVTAPKESAPALLDKLRLSGAHVTEVALSGRFHWPKHREDAKQLIAFCDHDPRFQFPDASEIVLPTRLSTGGRLHEIALQEILLKPSEWLSLFGLVQSSHIDAGGANFVCFGSERCVPPTMIRKLGPLLIHISDVDLSTSALPSELLRSTSASPFDNLPDDQIAVIGMACHVPGAEDLDEYWRILTSGQSQHTRVPLERFSMKTAFRELEENRKWYGNFLRDYDTFDHKFFKKSAREMSSADPQHRLVLKLAYQAIEQSGYFGASHNSKHVGCYIGIGNNDYERNIACHPANAYSATGNLRSFAAGKVSHYFGWTGPSLTIDTACSSSGVAIHQACRAILHGECTSALAGGVNVLTSPEWFQNLAGASFLSPTGQCKPFDARGDGYCRGEGAGVVFLKRLSSAIADGDQVLGVIASTKVYQNQNCTAITVPNSISLAGLFGDVVEQARLEPQAISVVEAHGTGTPVGDPAEYDAVRRVFGGSIRSDTLSLMSVKGLLGHTEFASGIVSLVKILLMINEGFIPPQASFTSMSPALNAYHEDMINIATQLTPWNVDFRAALINNYGASGSNASMIITQAPKPRSSTSNPSPLSSSATSFPFWLCGIDSQSLRAYATKFRRFIHDNADSVKDLTVRNLSFQISRQSNRNLPRALIFSAASRNELEEKLLDYEQGGRSIAEIEVPPPRPVILCFGGQISTYVGLGKDVYNQATILRSHLDQCNTVCLSLGLGSIYPAIFQRSPILDTVELQTVLFAAQYSCARAWIDSGVKVTAVIGHSFGELTALCIAGAYSLADALRLISGRARLIRDKWGSDKGSMLALEADLAEVTALLSTSNKPDVSIACYNGPRSFTLAGSTESVQFIEELARSNQTFFGMKLKKLNVTNAFHSANVDPLISDLEALGREIQFNEPIIQVEAATETRSSPTRGSHFIAQHLRNPVYFNHAVQRLAEEYPAAIWLEAGSNSTITTMISRALGNSSSPHHFQSVHITSEESLPLLAEATTKLWKEGLNVSFWAHHPMEVSQHSLVILPPYQFEKARHWMDLKEVPEVKSSIDTTVQPPEPPKGLTTFIGFEDQAKQSARFRVNTTCDKFQQLTSANVALNTTAVTPGMLQIEISLDAIMNLQPDFKTYQFQPEVQGVSYHNALIDSNSTDLYLDAIAKDDGGLAWRWRLYGTDLGDRVTEFSSGSIVFLPASDPALKENFERLSRLSGKKRCASLLQGNGADDVLQGRNIYRAFEQVVNYAEPFRRVTKIAGKEDESAGYVSKAYTGETWMDPVLTECFCQVAGIFINLMTDASDLSKRGVYICDGISRWMHYPGLGSMTSAPDAWEVFAVHHHESETKYVSDVFAFDPRDGSLIEAILGISYRLVPMDSMRKLLTRGPQQESHFSTAAVSSKSTPVHAPTPTTTVSSTPSSLNSFQEKTIVKNVAKPPGPDISAKMCEIICNLSGLEPEEIEDDSDLVELGIDSLMAMELVREVDSAFKCTLQNDQLMELTDFASLVSCIRSTLGFDDEESGVGFERDSSVDTEAYILLEPNEPATNINGANGTVSFDHRDGNAVLSMSTLLDAFREIKWDTDDDIVKGQLGTYSKHVMPRSTELCIVYIVDAFEQLGCPIRSAAPGQVLTRVPYHPKHEKFMNMIIYGLLEKDARLIDINGSIITRTAVAPPTASADTLLSKLLHDEPVHAAEHKLAALIGQKFADLITDKEDGLKLIFGNPESREIAADMYSNSPVNTVWIKQLERFFERVLGRLPKDGQPICILEVGGGTGGTTSRIVPLLAKLGVPVKYTMTDISGSLIAAARKRFKKYPFMDFKPLNMESEPDAKFLQSQHIILATNCIHATRNLSVSLKNLHRILRPDGALIMLEMTEQVPWCDFIFGLLEGWWLFEDGRDYVLQPATYWEKVLQSVGYGHVDWTEGELPEARIQRLIIAHASGSRYDRGPKPPLASIPELTLPDISERRARIDAAVHKYTKDFVAPSQILSPAKLPSLSSGQCVLVTGATGSLGAHIVASLVQRPGIHTVVCLNRLSTTEATVRQQNSLQMRGISLDPTSLSKLKVIETDTSKPNLGLSPENYQYLIQNVTEIVHSAWPMSLTRPMRTYEPQFKIARGLIDLAREVAQHRPAPFKFGFQFISSSAVIANYPLLAGTPVVPEQSGTVESVPLTGYAEAKLATERILAETLYRFPDRFHVMAVRIAQITGSTSNGYWNPSEYMPFLIKSSQVLKILPELDGTLSWYPVNDVASVLGELLLSQSTTDLIYHIDNPSRQTWREMIAILARALDLGQKSIVPFGQWVNRVRGFRGSIADNPALQLIDFFEHYFVPMSCGGLVLDTTKSSQHSKTLQNQGPIDEDLMMKYIARWKESGFLNP</sequence>
<gene>
    <name evidence="12" type="primary">claF</name>
</gene>
<protein>
    <recommendedName>
        <fullName evidence="12">Clavatol synthase claF</fullName>
        <ecNumber evidence="10">2.3.1.-</ecNumber>
    </recommendedName>
    <alternativeName>
        <fullName evidence="12">Clavatol biosynthesis cluster protein F</fullName>
    </alternativeName>
    <alternativeName>
        <fullName evidence="12">Non-reducing polyketide synthase claF</fullName>
    </alternativeName>
</protein>
<evidence type="ECO:0000250" key="1">
    <source>
        <dbReference type="UniProtKB" id="A0A0E0RXA7"/>
    </source>
</evidence>
<evidence type="ECO:0000250" key="2">
    <source>
        <dbReference type="UniProtKB" id="A0A0K0MCJ4"/>
    </source>
</evidence>
<evidence type="ECO:0000250" key="3">
    <source>
        <dbReference type="UniProtKB" id="A0A161CKG1"/>
    </source>
</evidence>
<evidence type="ECO:0000250" key="4">
    <source>
        <dbReference type="UniProtKB" id="Q65Z23"/>
    </source>
</evidence>
<evidence type="ECO:0000255" key="5"/>
<evidence type="ECO:0000255" key="6">
    <source>
        <dbReference type="PROSITE-ProRule" id="PRU00258"/>
    </source>
</evidence>
<evidence type="ECO:0000255" key="7">
    <source>
        <dbReference type="PROSITE-ProRule" id="PRU01348"/>
    </source>
</evidence>
<evidence type="ECO:0000255" key="8">
    <source>
        <dbReference type="PROSITE-ProRule" id="PRU01363"/>
    </source>
</evidence>
<evidence type="ECO:0000256" key="9">
    <source>
        <dbReference type="SAM" id="MobiDB-lite"/>
    </source>
</evidence>
<evidence type="ECO:0000269" key="10">
    <source>
    </source>
</evidence>
<evidence type="ECO:0000269" key="11">
    <source>
    </source>
</evidence>
<evidence type="ECO:0000303" key="12">
    <source>
    </source>
</evidence>
<evidence type="ECO:0000305" key="13">
    <source>
    </source>
</evidence>
<proteinExistence type="evidence at protein level"/>
<dbReference type="EC" id="2.3.1.-" evidence="10"/>
<dbReference type="EMBL" id="MK360918">
    <property type="protein sequence ID" value="QBK15044.1"/>
    <property type="molecule type" value="Genomic_DNA"/>
</dbReference>
<dbReference type="SMR" id="A0A481WQB6"/>
<dbReference type="GO" id="GO:0004315">
    <property type="term" value="F:3-oxoacyl-[acyl-carrier-protein] synthase activity"/>
    <property type="evidence" value="ECO:0007669"/>
    <property type="project" value="InterPro"/>
</dbReference>
<dbReference type="GO" id="GO:0008168">
    <property type="term" value="F:methyltransferase activity"/>
    <property type="evidence" value="ECO:0007669"/>
    <property type="project" value="UniProtKB-KW"/>
</dbReference>
<dbReference type="GO" id="GO:0031177">
    <property type="term" value="F:phosphopantetheine binding"/>
    <property type="evidence" value="ECO:0007669"/>
    <property type="project" value="InterPro"/>
</dbReference>
<dbReference type="GO" id="GO:0006633">
    <property type="term" value="P:fatty acid biosynthetic process"/>
    <property type="evidence" value="ECO:0007669"/>
    <property type="project" value="InterPro"/>
</dbReference>
<dbReference type="GO" id="GO:0032259">
    <property type="term" value="P:methylation"/>
    <property type="evidence" value="ECO:0007669"/>
    <property type="project" value="UniProtKB-KW"/>
</dbReference>
<dbReference type="GO" id="GO:0030639">
    <property type="term" value="P:polyketide biosynthetic process"/>
    <property type="evidence" value="ECO:0007669"/>
    <property type="project" value="UniProtKB-ARBA"/>
</dbReference>
<dbReference type="CDD" id="cd00833">
    <property type="entry name" value="PKS"/>
    <property type="match status" value="1"/>
</dbReference>
<dbReference type="Gene3D" id="3.30.70.3290">
    <property type="match status" value="1"/>
</dbReference>
<dbReference type="Gene3D" id="3.40.47.10">
    <property type="match status" value="1"/>
</dbReference>
<dbReference type="Gene3D" id="1.10.1200.10">
    <property type="entry name" value="ACP-like"/>
    <property type="match status" value="1"/>
</dbReference>
<dbReference type="Gene3D" id="3.40.366.10">
    <property type="entry name" value="Malonyl-Coenzyme A Acyl Carrier Protein, domain 2"/>
    <property type="match status" value="2"/>
</dbReference>
<dbReference type="Gene3D" id="3.40.50.720">
    <property type="entry name" value="NAD(P)-binding Rossmann-like Domain"/>
    <property type="match status" value="1"/>
</dbReference>
<dbReference type="Gene3D" id="3.10.129.110">
    <property type="entry name" value="Polyketide synthase dehydratase"/>
    <property type="match status" value="1"/>
</dbReference>
<dbReference type="Gene3D" id="3.40.50.150">
    <property type="entry name" value="Vaccinia Virus protein VP39"/>
    <property type="match status" value="1"/>
</dbReference>
<dbReference type="InterPro" id="IPR001227">
    <property type="entry name" value="Ac_transferase_dom_sf"/>
</dbReference>
<dbReference type="InterPro" id="IPR036736">
    <property type="entry name" value="ACP-like_sf"/>
</dbReference>
<dbReference type="InterPro" id="IPR014043">
    <property type="entry name" value="Acyl_transferase_dom"/>
</dbReference>
<dbReference type="InterPro" id="IPR016035">
    <property type="entry name" value="Acyl_Trfase/lysoPLipase"/>
</dbReference>
<dbReference type="InterPro" id="IPR013120">
    <property type="entry name" value="Far_NAD-bd"/>
</dbReference>
<dbReference type="InterPro" id="IPR018201">
    <property type="entry name" value="Ketoacyl_synth_AS"/>
</dbReference>
<dbReference type="InterPro" id="IPR014031">
    <property type="entry name" value="Ketoacyl_synth_C"/>
</dbReference>
<dbReference type="InterPro" id="IPR014030">
    <property type="entry name" value="Ketoacyl_synth_N"/>
</dbReference>
<dbReference type="InterPro" id="IPR016036">
    <property type="entry name" value="Malonyl_transacylase_ACP-bd"/>
</dbReference>
<dbReference type="InterPro" id="IPR013217">
    <property type="entry name" value="Methyltransf_12"/>
</dbReference>
<dbReference type="InterPro" id="IPR036291">
    <property type="entry name" value="NAD(P)-bd_dom_sf"/>
</dbReference>
<dbReference type="InterPro" id="IPR020841">
    <property type="entry name" value="PKS_Beta-ketoAc_synthase_dom"/>
</dbReference>
<dbReference type="InterPro" id="IPR042104">
    <property type="entry name" value="PKS_dehydratase_sf"/>
</dbReference>
<dbReference type="InterPro" id="IPR049900">
    <property type="entry name" value="PKS_mFAS_DH"/>
</dbReference>
<dbReference type="InterPro" id="IPR020806">
    <property type="entry name" value="PKS_PP-bd"/>
</dbReference>
<dbReference type="InterPro" id="IPR050444">
    <property type="entry name" value="Polyketide_Synthase"/>
</dbReference>
<dbReference type="InterPro" id="IPR009081">
    <property type="entry name" value="PP-bd_ACP"/>
</dbReference>
<dbReference type="InterPro" id="IPR006162">
    <property type="entry name" value="Ppantetheine_attach_site"/>
</dbReference>
<dbReference type="InterPro" id="IPR029063">
    <property type="entry name" value="SAM-dependent_MTases_sf"/>
</dbReference>
<dbReference type="InterPro" id="IPR032088">
    <property type="entry name" value="SAT"/>
</dbReference>
<dbReference type="InterPro" id="IPR016039">
    <property type="entry name" value="Thiolase-like"/>
</dbReference>
<dbReference type="PANTHER" id="PTHR45681:SF6">
    <property type="entry name" value="POLYKETIDE SYNTHASE 37"/>
    <property type="match status" value="1"/>
</dbReference>
<dbReference type="PANTHER" id="PTHR45681">
    <property type="entry name" value="POLYKETIDE SYNTHASE 44-RELATED"/>
    <property type="match status" value="1"/>
</dbReference>
<dbReference type="Pfam" id="PF00698">
    <property type="entry name" value="Acyl_transf_1"/>
    <property type="match status" value="1"/>
</dbReference>
<dbReference type="Pfam" id="PF18558">
    <property type="entry name" value="HTH_51"/>
    <property type="match status" value="1"/>
</dbReference>
<dbReference type="Pfam" id="PF00109">
    <property type="entry name" value="ketoacyl-synt"/>
    <property type="match status" value="1"/>
</dbReference>
<dbReference type="Pfam" id="PF02801">
    <property type="entry name" value="Ketoacyl-synt_C"/>
    <property type="match status" value="1"/>
</dbReference>
<dbReference type="Pfam" id="PF08242">
    <property type="entry name" value="Methyltransf_12"/>
    <property type="match status" value="1"/>
</dbReference>
<dbReference type="Pfam" id="PF07993">
    <property type="entry name" value="NAD_binding_4"/>
    <property type="match status" value="1"/>
</dbReference>
<dbReference type="Pfam" id="PF00550">
    <property type="entry name" value="PP-binding"/>
    <property type="match status" value="1"/>
</dbReference>
<dbReference type="Pfam" id="PF16073">
    <property type="entry name" value="SAT"/>
    <property type="match status" value="1"/>
</dbReference>
<dbReference type="SMART" id="SM00827">
    <property type="entry name" value="PKS_AT"/>
    <property type="match status" value="1"/>
</dbReference>
<dbReference type="SMART" id="SM00825">
    <property type="entry name" value="PKS_KS"/>
    <property type="match status" value="1"/>
</dbReference>
<dbReference type="SMART" id="SM00823">
    <property type="entry name" value="PKS_PP"/>
    <property type="match status" value="1"/>
</dbReference>
<dbReference type="SUPFAM" id="SSF47336">
    <property type="entry name" value="ACP-like"/>
    <property type="match status" value="1"/>
</dbReference>
<dbReference type="SUPFAM" id="SSF52151">
    <property type="entry name" value="FabD/lysophospholipase-like"/>
    <property type="match status" value="1"/>
</dbReference>
<dbReference type="SUPFAM" id="SSF51735">
    <property type="entry name" value="NAD(P)-binding Rossmann-fold domains"/>
    <property type="match status" value="1"/>
</dbReference>
<dbReference type="SUPFAM" id="SSF55048">
    <property type="entry name" value="Probable ACP-binding domain of malonyl-CoA ACP transacylase"/>
    <property type="match status" value="1"/>
</dbReference>
<dbReference type="SUPFAM" id="SSF53335">
    <property type="entry name" value="S-adenosyl-L-methionine-dependent methyltransferases"/>
    <property type="match status" value="1"/>
</dbReference>
<dbReference type="SUPFAM" id="SSF53901">
    <property type="entry name" value="Thiolase-like"/>
    <property type="match status" value="1"/>
</dbReference>
<dbReference type="PROSITE" id="PS50075">
    <property type="entry name" value="CARRIER"/>
    <property type="match status" value="1"/>
</dbReference>
<dbReference type="PROSITE" id="PS00606">
    <property type="entry name" value="KS3_1"/>
    <property type="match status" value="1"/>
</dbReference>
<dbReference type="PROSITE" id="PS52004">
    <property type="entry name" value="KS3_2"/>
    <property type="match status" value="1"/>
</dbReference>
<dbReference type="PROSITE" id="PS00012">
    <property type="entry name" value="PHOSPHOPANTETHEINE"/>
    <property type="match status" value="1"/>
</dbReference>
<dbReference type="PROSITE" id="PS52019">
    <property type="entry name" value="PKS_MFAS_DH"/>
    <property type="match status" value="1"/>
</dbReference>
<feature type="chain" id="PRO_0000455054" description="Clavatol synthase claF">
    <location>
        <begin position="1"/>
        <end position="2587"/>
    </location>
</feature>
<feature type="domain" description="Ketosynthase family 3 (KS3)" evidence="7 13">
    <location>
        <begin position="383"/>
        <end position="799"/>
    </location>
</feature>
<feature type="domain" description="PKS/mFAS DH" evidence="8">
    <location>
        <begin position="1284"/>
        <end position="1595"/>
    </location>
</feature>
<feature type="domain" description="Carrier" evidence="5 6 13">
    <location>
        <begin position="1654"/>
        <end position="1728"/>
    </location>
</feature>
<feature type="region of interest" description="N-terminal acylcarrier protein transacylase domain (SAT)" evidence="5 13">
    <location>
        <begin position="93"/>
        <end position="256"/>
    </location>
</feature>
<feature type="region of interest" description="Malonyl-CoA:ACP transacylase (MAT) domain" evidence="5 13">
    <location>
        <begin position="912"/>
        <end position="1222"/>
    </location>
</feature>
<feature type="region of interest" description="N-terminal hotdog fold" evidence="8">
    <location>
        <begin position="1284"/>
        <end position="1416"/>
    </location>
</feature>
<feature type="region of interest" description="Product template (PT) domain" evidence="5">
    <location>
        <begin position="1315"/>
        <end position="1593"/>
    </location>
</feature>
<feature type="region of interest" description="C-terminal hotdog fold" evidence="8">
    <location>
        <begin position="1436"/>
        <end position="1595"/>
    </location>
</feature>
<feature type="region of interest" description="Disordered" evidence="9">
    <location>
        <begin position="1609"/>
        <end position="1635"/>
    </location>
</feature>
<feature type="region of interest" description="Methyltransferase (CMeT) domain" evidence="5 13">
    <location>
        <begin position="1952"/>
        <end position="2126"/>
    </location>
</feature>
<feature type="region of interest" description="NADPH-binding (R) domain" evidence="5 13">
    <location>
        <begin position="2208"/>
        <end position="2452"/>
    </location>
</feature>
<feature type="compositionally biased region" description="Low complexity" evidence="9">
    <location>
        <begin position="1617"/>
        <end position="1635"/>
    </location>
</feature>
<feature type="active site" description="Nucleophile; for transacylase activity" evidence="2">
    <location>
        <position position="137"/>
    </location>
</feature>
<feature type="active site" description="Proton donor/acceptor; for transacylase activity" evidence="2">
    <location>
        <position position="256"/>
    </location>
</feature>
<feature type="active site" description="For beta-ketoacyl synthase activity" evidence="7">
    <location>
        <position position="548"/>
    </location>
</feature>
<feature type="active site" description="For beta-ketoacyl synthase activity" evidence="7">
    <location>
        <position position="683"/>
    </location>
</feature>
<feature type="active site" description="For beta-ketoacyl synthase activity" evidence="7">
    <location>
        <position position="722"/>
    </location>
</feature>
<feature type="active site" description="For methyltransferase activity" evidence="4">
    <location>
        <position position="1947"/>
    </location>
</feature>
<feature type="active site" description="For methyltransferase activity" evidence="4">
    <location>
        <position position="2059"/>
    </location>
</feature>
<feature type="active site" description="For methyltransferase activity" evidence="4">
    <location>
        <position position="2085"/>
    </location>
</feature>
<feature type="modified residue" description="O-(pantetheine 4'-phosphoryl)serine" evidence="6">
    <location>
        <position position="1688"/>
    </location>
</feature>
<organism>
    <name type="scientific">Penicillium crustosum</name>
    <name type="common">Blue mold fungus</name>
    <dbReference type="NCBI Taxonomy" id="36656"/>
    <lineage>
        <taxon>Eukaryota</taxon>
        <taxon>Fungi</taxon>
        <taxon>Dikarya</taxon>
        <taxon>Ascomycota</taxon>
        <taxon>Pezizomycotina</taxon>
        <taxon>Eurotiomycetes</taxon>
        <taxon>Eurotiomycetidae</taxon>
        <taxon>Eurotiales</taxon>
        <taxon>Aspergillaceae</taxon>
        <taxon>Penicillium</taxon>
    </lineage>
</organism>